<comment type="function">
    <text evidence="1 4">Monocarboxylate-proton symporter that mediates the efflux of the waste product lactate in the intraerythrocytic parasites; active in acidic-to-neutral pH range (By similarity). Transports L-lactate (PubMed:33336890).</text>
</comment>
<comment type="catalytic activity">
    <reaction evidence="4">
        <text>(S)-lactate(in) + H(+)(in) = (S)-lactate(out) + H(+)(out)</text>
        <dbReference type="Rhea" id="RHEA:29415"/>
        <dbReference type="ChEBI" id="CHEBI:15378"/>
        <dbReference type="ChEBI" id="CHEBI:16651"/>
    </reaction>
</comment>
<comment type="catalytic activity">
    <reaction evidence="1">
        <text>formate(in) + H(+)(in) = formate(out) + H(+)(out)</text>
        <dbReference type="Rhea" id="RHEA:80887"/>
        <dbReference type="ChEBI" id="CHEBI:15378"/>
        <dbReference type="ChEBI" id="CHEBI:15740"/>
    </reaction>
</comment>
<comment type="catalytic activity">
    <reaction evidence="1">
        <text>pyruvate(out) + H(+)(out) = pyruvate(in) + H(+)(in)</text>
        <dbReference type="Rhea" id="RHEA:64720"/>
        <dbReference type="ChEBI" id="CHEBI:15361"/>
        <dbReference type="ChEBI" id="CHEBI:15378"/>
    </reaction>
</comment>
<comment type="catalytic activity">
    <reaction evidence="1">
        <text>acetate(out) + H(+)(out) = acetate(in) + H(+)(in)</text>
        <dbReference type="Rhea" id="RHEA:71803"/>
        <dbReference type="ChEBI" id="CHEBI:15378"/>
        <dbReference type="ChEBI" id="CHEBI:30089"/>
    </reaction>
</comment>
<comment type="activity regulation">
    <text evidence="4">Inhibited by the Malaria Box compound MMV007839 and its derivatives BH296 and BH267.meta.</text>
</comment>
<comment type="subunit">
    <text evidence="1">Homopentamer.</text>
</comment>
<comment type="subcellular location">
    <subcellularLocation>
        <location evidence="1">Cell membrane</location>
        <topology evidence="2">Multi-pass membrane protein</topology>
    </subcellularLocation>
    <subcellularLocation>
        <location evidence="1">Vacuole membrane</location>
        <topology evidence="2">Multi-pass membrane protein</topology>
    </subcellularLocation>
</comment>
<comment type="similarity">
    <text evidence="6">Belongs to the FNT transporter (TC 1.A.16) family.</text>
</comment>
<feature type="chain" id="PRO_0000461318" description="Formate-nitrite transporter">
    <location>
        <begin position="1"/>
        <end position="313"/>
    </location>
</feature>
<feature type="topological domain" description="Cytoplasmic" evidence="6">
    <location>
        <begin position="1"/>
        <end position="46"/>
    </location>
</feature>
<feature type="transmembrane region" description="Helical" evidence="2">
    <location>
        <begin position="47"/>
        <end position="67"/>
    </location>
</feature>
<feature type="topological domain" description="Extracellular" evidence="6">
    <location>
        <begin position="68"/>
        <end position="77"/>
    </location>
</feature>
<feature type="transmembrane region" description="Helical" evidence="2">
    <location>
        <begin position="78"/>
        <end position="98"/>
    </location>
</feature>
<feature type="topological domain" description="Cytoplasmic" evidence="6">
    <location>
        <begin position="99"/>
        <end position="127"/>
    </location>
</feature>
<feature type="transmembrane region" description="Helical" evidence="2">
    <location>
        <begin position="128"/>
        <end position="148"/>
    </location>
</feature>
<feature type="topological domain" description="Extracellular" evidence="6">
    <location>
        <begin position="149"/>
        <end position="184"/>
    </location>
</feature>
<feature type="transmembrane region" description="Helical" evidence="2">
    <location>
        <begin position="185"/>
        <end position="205"/>
    </location>
</feature>
<feature type="topological domain" description="Cytoplasmic" evidence="6">
    <location>
        <begin position="206"/>
        <end position="210"/>
    </location>
</feature>
<feature type="transmembrane region" description="Helical" evidence="2">
    <location>
        <begin position="211"/>
        <end position="231"/>
    </location>
</feature>
<feature type="topological domain" description="Extracellular" evidence="6">
    <location>
        <begin position="232"/>
        <end position="256"/>
    </location>
</feature>
<feature type="transmembrane region" description="Helical" evidence="2">
    <location>
        <begin position="257"/>
        <end position="277"/>
    </location>
</feature>
<feature type="topological domain" description="Cytoplasmic" evidence="6">
    <location>
        <begin position="278"/>
        <end position="313"/>
    </location>
</feature>
<feature type="region of interest" description="Disordered" evidence="3">
    <location>
        <begin position="290"/>
        <end position="313"/>
    </location>
</feature>
<feature type="compositionally biased region" description="Polar residues" evidence="3">
    <location>
        <begin position="298"/>
        <end position="313"/>
    </location>
</feature>
<proteinExistence type="inferred from homology"/>
<reference evidence="12" key="1">
    <citation type="submission" date="2016-07" db="EMBL/GenBank/DDBJ databases">
        <authorList>
            <consortium name="Pathogen Informatics"/>
        </authorList>
    </citation>
    <scope>NUCLEOTIDE SEQUENCE [LARGE SCALE GENOMIC DNA]</scope>
    <source>
        <strain evidence="7">PvW1</strain>
    </source>
</reference>
<reference evidence="6" key="2">
    <citation type="journal article" date="2021" name="ChemMedChem">
        <title>Pentafluoro-3-hydroxy-pent-2-en-1-ones Potently Inhibit FNT-Type Lactate Transporters from all Five Human-Pathogenic Plasmodium Species.</title>
        <authorList>
            <person name="Walloch P."/>
            <person name="Hansen C."/>
            <person name="Priegann T."/>
            <person name="Schade D."/>
            <person name="Beitz E."/>
        </authorList>
    </citation>
    <scope>FUNCTION</scope>
    <scope>TRANSPORTER ACTIVITY</scope>
    <scope>ACTIVITY REGULATION</scope>
</reference>
<accession>A0A1G4GWI6</accession>
<sequence length="313" mass="34277">MTKGSKYTIDPISVKTACTSEESYIRCVEYGKGKAHYPNLSLLAKAILAGVFVGVCAHASGIAGGHFYYHKLREHVGISMSAFVYGFTFPIAFLCIIATGSDLFTGNTLAVTTALLQRKVTLLEYLRVMSISLFGNYVGAVSFAFFVSHLSGAFKKHEEIGKNHIFQFLNDIAEKKVSHTFVQCVCLAIGCNIFVCLAVYFVLTIKDGSGMVFSVFFAVYAFAIAGYEHIIANMYTLNLALMIEANVDWTKVYVDNLLPTLIGNYIAGAIVLACPLFYIYRHSYSDYEKTRGDGGNSGLKSLSIEMQNGSSGR</sequence>
<dbReference type="EMBL" id="CAJZCX010000009">
    <property type="protein sequence ID" value="CAG9479138.1"/>
    <property type="molecule type" value="Genomic_DNA"/>
</dbReference>
<dbReference type="EMBL" id="LT615246">
    <property type="protein sequence ID" value="SCO66955.1"/>
    <property type="molecule type" value="Genomic_DNA"/>
</dbReference>
<dbReference type="EMBL" id="LT615263">
    <property type="protein sequence ID" value="SCO72383.1"/>
    <property type="molecule type" value="Genomic_DNA"/>
</dbReference>
<dbReference type="EMBL" id="LT635619">
    <property type="protein sequence ID" value="VUZ95377.1"/>
    <property type="molecule type" value="Genomic_DNA"/>
</dbReference>
<dbReference type="SMR" id="A0A1G4GWI6"/>
<dbReference type="VEuPathDB" id="PlasmoDB:PVP01_0823500"/>
<dbReference type="VEuPathDB" id="PlasmoDB:PVPAM_080035900"/>
<dbReference type="VEuPathDB" id="PlasmoDB:PVW1_080029100"/>
<dbReference type="VEuPathDB" id="PlasmoDB:PVX_095405"/>
<dbReference type="eggNOG" id="ENOG502S3A5">
    <property type="taxonomic scope" value="Eukaryota"/>
</dbReference>
<dbReference type="OrthoDB" id="4829at2759"/>
<dbReference type="Proteomes" id="UP000196402">
    <property type="component" value="Chromosome 8"/>
</dbReference>
<dbReference type="Proteomes" id="UP000220605">
    <property type="component" value="Chromosome 8"/>
</dbReference>
<dbReference type="Proteomes" id="UP000305196">
    <property type="component" value="Chromosome 8"/>
</dbReference>
<dbReference type="Proteomes" id="UP000779233">
    <property type="component" value="Unassembled WGS sequence"/>
</dbReference>
<dbReference type="GO" id="GO:0005886">
    <property type="term" value="C:plasma membrane"/>
    <property type="evidence" value="ECO:0007669"/>
    <property type="project" value="UniProtKB-SubCell"/>
</dbReference>
<dbReference type="GO" id="GO:0005774">
    <property type="term" value="C:vacuolar membrane"/>
    <property type="evidence" value="ECO:0007669"/>
    <property type="project" value="UniProtKB-SubCell"/>
</dbReference>
<dbReference type="GO" id="GO:0015513">
    <property type="term" value="F:high-affinity secondary active nitrite transmembrane transporter activity"/>
    <property type="evidence" value="ECO:0007669"/>
    <property type="project" value="TreeGrafter"/>
</dbReference>
<dbReference type="GO" id="GO:0015707">
    <property type="term" value="P:nitrite transport"/>
    <property type="evidence" value="ECO:0007669"/>
    <property type="project" value="TreeGrafter"/>
</dbReference>
<dbReference type="Gene3D" id="1.20.1080.10">
    <property type="entry name" value="Glycerol uptake facilitator protein"/>
    <property type="match status" value="1"/>
</dbReference>
<dbReference type="InterPro" id="IPR023271">
    <property type="entry name" value="Aquaporin-like"/>
</dbReference>
<dbReference type="InterPro" id="IPR000292">
    <property type="entry name" value="For/NO2_transpt"/>
</dbReference>
<dbReference type="InterPro" id="IPR024002">
    <property type="entry name" value="For/NO2_transpt_CS"/>
</dbReference>
<dbReference type="NCBIfam" id="TIGR00790">
    <property type="entry name" value="fnt"/>
    <property type="match status" value="1"/>
</dbReference>
<dbReference type="PANTHER" id="PTHR30520">
    <property type="entry name" value="FORMATE TRANSPORTER-RELATED"/>
    <property type="match status" value="1"/>
</dbReference>
<dbReference type="PANTHER" id="PTHR30520:SF6">
    <property type="entry name" value="FORMATE_NITRATE FAMILY TRANSPORTER (EUROFUNG)"/>
    <property type="match status" value="1"/>
</dbReference>
<dbReference type="Pfam" id="PF01226">
    <property type="entry name" value="Form_Nir_trans"/>
    <property type="match status" value="1"/>
</dbReference>
<dbReference type="PROSITE" id="PS01006">
    <property type="entry name" value="FORMATE_NITRITE_TP_2"/>
    <property type="match status" value="1"/>
</dbReference>
<evidence type="ECO:0000250" key="1">
    <source>
        <dbReference type="UniProtKB" id="O77389"/>
    </source>
</evidence>
<evidence type="ECO:0000255" key="2"/>
<evidence type="ECO:0000256" key="3">
    <source>
        <dbReference type="SAM" id="MobiDB-lite"/>
    </source>
</evidence>
<evidence type="ECO:0000269" key="4">
    <source>
    </source>
</evidence>
<evidence type="ECO:0000303" key="5">
    <source>
    </source>
</evidence>
<evidence type="ECO:0000305" key="6"/>
<evidence type="ECO:0000312" key="7">
    <source>
        <dbReference type="EMBL" id="CAG9479138.1"/>
    </source>
</evidence>
<evidence type="ECO:0000312" key="8">
    <source>
        <dbReference type="EMBL" id="SCO66955.1"/>
    </source>
</evidence>
<evidence type="ECO:0000312" key="9">
    <source>
        <dbReference type="EMBL" id="SCO72383.1"/>
    </source>
</evidence>
<evidence type="ECO:0000312" key="10">
    <source>
        <dbReference type="EMBL" id="VUZ95377.1"/>
    </source>
</evidence>
<evidence type="ECO:0000312" key="11">
    <source>
        <dbReference type="Proteomes" id="UP000196402"/>
    </source>
</evidence>
<evidence type="ECO:0000312" key="12">
    <source>
        <dbReference type="Proteomes" id="UP000220605"/>
    </source>
</evidence>
<organism evidence="11">
    <name type="scientific">Plasmodium vivax</name>
    <dbReference type="NCBI Taxonomy" id="5855"/>
    <lineage>
        <taxon>Eukaryota</taxon>
        <taxon>Sar</taxon>
        <taxon>Alveolata</taxon>
        <taxon>Apicomplexa</taxon>
        <taxon>Aconoidasida</taxon>
        <taxon>Haemosporida</taxon>
        <taxon>Plasmodiidae</taxon>
        <taxon>Plasmodium</taxon>
        <taxon>Plasmodium (Plasmodium)</taxon>
    </lineage>
</organism>
<keyword id="KW-1003">Cell membrane</keyword>
<keyword id="KW-0472">Membrane</keyword>
<keyword id="KW-0812">Transmembrane</keyword>
<keyword id="KW-1133">Transmembrane helix</keyword>
<keyword id="KW-0813">Transport</keyword>
<keyword id="KW-0926">Vacuole</keyword>
<protein>
    <recommendedName>
        <fullName evidence="6">Formate-nitrite transporter</fullName>
        <shortName evidence="5">PvFNT</shortName>
    </recommendedName>
    <alternativeName>
        <fullName evidence="5">FNT-type lactate transporter</fullName>
    </alternativeName>
</protein>
<name>FNT_PLAVI</name>
<gene>
    <name evidence="9" type="ORF">PVC01_080028700</name>
    <name evidence="10" type="ORF">PVP01_0823500</name>
    <name evidence="8" type="ORF">PVT01_080028800</name>
    <name evidence="7" type="ORF">PVW1_080029100</name>
</gene>